<sequence length="298" mass="31156">MQLEKMITEGSNAASAEIDRVSTLEMCRIINDEDKTVPLAVERVLPDIAAAIDVIHAQVSGGGRLIYLGAGTSGRLGILDASECPPTYGVKPGLVVGLIAGGEYAIQHAVEGAEDSREGGVNDLKNIGLTAQDVVVGIAASGRTPYVIAGLEYARQLGCRTVGISCNPGSAVSTTAEFAITPIVGAEVVTGSSRMKAGTAQKLVLNMLSTGLMIKSGKVFGNLMVDVVATNEKLHVRQVNIVKNATGCNAEQAETALIACERNCKTAIVMVLKNLDAAEAKKRLDQHGGFIRQVLDKE</sequence>
<accession>B7NPW4</accession>
<feature type="chain" id="PRO_1000116993" description="N-acetylmuramic acid 6-phosphate etherase">
    <location>
        <begin position="1"/>
        <end position="298"/>
    </location>
</feature>
<feature type="domain" description="SIS" evidence="1">
    <location>
        <begin position="55"/>
        <end position="218"/>
    </location>
</feature>
<feature type="active site" description="Proton donor" evidence="1">
    <location>
        <position position="83"/>
    </location>
</feature>
<feature type="active site" evidence="1">
    <location>
        <position position="114"/>
    </location>
</feature>
<comment type="function">
    <text evidence="1">Specifically catalyzes the cleavage of the D-lactyl ether substituent of MurNAc 6-phosphate, producing GlcNAc 6-phosphate and D-lactate. Together with AnmK, is also required for the utilization of anhydro-N-acetylmuramic acid (anhMurNAc) either imported from the medium or derived from its own cell wall murein, and thus plays a role in cell wall recycling.</text>
</comment>
<comment type="catalytic activity">
    <reaction evidence="1">
        <text>N-acetyl-D-muramate 6-phosphate + H2O = N-acetyl-D-glucosamine 6-phosphate + (R)-lactate</text>
        <dbReference type="Rhea" id="RHEA:26410"/>
        <dbReference type="ChEBI" id="CHEBI:15377"/>
        <dbReference type="ChEBI" id="CHEBI:16004"/>
        <dbReference type="ChEBI" id="CHEBI:57513"/>
        <dbReference type="ChEBI" id="CHEBI:58722"/>
        <dbReference type="EC" id="4.2.1.126"/>
    </reaction>
</comment>
<comment type="pathway">
    <text evidence="1">Amino-sugar metabolism; 1,6-anhydro-N-acetylmuramate degradation.</text>
</comment>
<comment type="pathway">
    <text evidence="1">Amino-sugar metabolism; N-acetylmuramate degradation.</text>
</comment>
<comment type="pathway">
    <text evidence="1">Cell wall biogenesis; peptidoglycan recycling.</text>
</comment>
<comment type="subunit">
    <text evidence="1">Homodimer.</text>
</comment>
<comment type="induction">
    <text evidence="1">Induced by MurNAc 6-phosphate that releases the repressor MurR from the DNA. Repressed by MurR in the absence of MurNAc 6-phosphate.</text>
</comment>
<comment type="miscellaneous">
    <text evidence="1">A lyase-type mechanism (elimination/hydration) is suggested for the cleavage of the lactyl ether bond of MurNAc 6-phosphate, with the formation of an alpha,beta-unsaturated aldehyde intermediate with (E)-stereochemistry, followed by the syn addition of water to give product.</text>
</comment>
<comment type="similarity">
    <text evidence="1">Belongs to the GCKR-like family. MurNAc-6-P etherase subfamily.</text>
</comment>
<reference key="1">
    <citation type="journal article" date="2009" name="PLoS Genet.">
        <title>Organised genome dynamics in the Escherichia coli species results in highly diverse adaptive paths.</title>
        <authorList>
            <person name="Touchon M."/>
            <person name="Hoede C."/>
            <person name="Tenaillon O."/>
            <person name="Barbe V."/>
            <person name="Baeriswyl S."/>
            <person name="Bidet P."/>
            <person name="Bingen E."/>
            <person name="Bonacorsi S."/>
            <person name="Bouchier C."/>
            <person name="Bouvet O."/>
            <person name="Calteau A."/>
            <person name="Chiapello H."/>
            <person name="Clermont O."/>
            <person name="Cruveiller S."/>
            <person name="Danchin A."/>
            <person name="Diard M."/>
            <person name="Dossat C."/>
            <person name="Karoui M.E."/>
            <person name="Frapy E."/>
            <person name="Garry L."/>
            <person name="Ghigo J.M."/>
            <person name="Gilles A.M."/>
            <person name="Johnson J."/>
            <person name="Le Bouguenec C."/>
            <person name="Lescat M."/>
            <person name="Mangenot S."/>
            <person name="Martinez-Jehanne V."/>
            <person name="Matic I."/>
            <person name="Nassif X."/>
            <person name="Oztas S."/>
            <person name="Petit M.A."/>
            <person name="Pichon C."/>
            <person name="Rouy Z."/>
            <person name="Ruf C.S."/>
            <person name="Schneider D."/>
            <person name="Tourret J."/>
            <person name="Vacherie B."/>
            <person name="Vallenet D."/>
            <person name="Medigue C."/>
            <person name="Rocha E.P.C."/>
            <person name="Denamur E."/>
        </authorList>
    </citation>
    <scope>NUCLEOTIDE SEQUENCE [LARGE SCALE GENOMIC DNA]</scope>
    <source>
        <strain>IAI39 / ExPEC</strain>
    </source>
</reference>
<keyword id="KW-0119">Carbohydrate metabolism</keyword>
<keyword id="KW-0456">Lyase</keyword>
<proteinExistence type="inferred from homology"/>
<gene>
    <name evidence="1" type="primary">murQ</name>
    <name type="ordered locus">ECIAI39_2573</name>
</gene>
<name>MURQ_ECO7I</name>
<protein>
    <recommendedName>
        <fullName evidence="1">N-acetylmuramic acid 6-phosphate etherase</fullName>
        <shortName evidence="1">MurNAc-6-P etherase</shortName>
        <ecNumber evidence="1">4.2.1.126</ecNumber>
    </recommendedName>
    <alternativeName>
        <fullName evidence="1">N-acetylmuramic acid 6-phosphate hydrolase</fullName>
    </alternativeName>
    <alternativeName>
        <fullName evidence="1">N-acetylmuramic acid 6-phosphate lyase</fullName>
    </alternativeName>
</protein>
<dbReference type="EC" id="4.2.1.126" evidence="1"/>
<dbReference type="EMBL" id="CU928164">
    <property type="protein sequence ID" value="CAR18697.1"/>
    <property type="molecule type" value="Genomic_DNA"/>
</dbReference>
<dbReference type="RefSeq" id="WP_001175613.1">
    <property type="nucleotide sequence ID" value="NC_011750.1"/>
</dbReference>
<dbReference type="RefSeq" id="YP_002408523.1">
    <property type="nucleotide sequence ID" value="NC_011750.1"/>
</dbReference>
<dbReference type="SMR" id="B7NPW4"/>
<dbReference type="STRING" id="585057.ECIAI39_2573"/>
<dbReference type="KEGG" id="ect:ECIAI39_2573"/>
<dbReference type="PATRIC" id="fig|585057.6.peg.2679"/>
<dbReference type="HOGENOM" id="CLU_049049_1_1_6"/>
<dbReference type="UniPathway" id="UPA00342"/>
<dbReference type="UniPathway" id="UPA00343"/>
<dbReference type="UniPathway" id="UPA00544"/>
<dbReference type="Proteomes" id="UP000000749">
    <property type="component" value="Chromosome"/>
</dbReference>
<dbReference type="GO" id="GO:0097367">
    <property type="term" value="F:carbohydrate derivative binding"/>
    <property type="evidence" value="ECO:0007669"/>
    <property type="project" value="InterPro"/>
</dbReference>
<dbReference type="GO" id="GO:0016835">
    <property type="term" value="F:carbon-oxygen lyase activity"/>
    <property type="evidence" value="ECO:0007669"/>
    <property type="project" value="UniProtKB-UniRule"/>
</dbReference>
<dbReference type="GO" id="GO:0016803">
    <property type="term" value="F:ether hydrolase activity"/>
    <property type="evidence" value="ECO:0007669"/>
    <property type="project" value="TreeGrafter"/>
</dbReference>
<dbReference type="GO" id="GO:0097175">
    <property type="term" value="P:1,6-anhydro-N-acetyl-beta-muramic acid catabolic process"/>
    <property type="evidence" value="ECO:0007669"/>
    <property type="project" value="UniProtKB-UniRule"/>
</dbReference>
<dbReference type="GO" id="GO:0046348">
    <property type="term" value="P:amino sugar catabolic process"/>
    <property type="evidence" value="ECO:0007669"/>
    <property type="project" value="InterPro"/>
</dbReference>
<dbReference type="GO" id="GO:0097173">
    <property type="term" value="P:N-acetylmuramic acid catabolic process"/>
    <property type="evidence" value="ECO:0007669"/>
    <property type="project" value="UniProtKB-UniPathway"/>
</dbReference>
<dbReference type="GO" id="GO:0009254">
    <property type="term" value="P:peptidoglycan turnover"/>
    <property type="evidence" value="ECO:0007669"/>
    <property type="project" value="UniProtKB-UniRule"/>
</dbReference>
<dbReference type="CDD" id="cd05007">
    <property type="entry name" value="SIS_Etherase"/>
    <property type="match status" value="1"/>
</dbReference>
<dbReference type="FunFam" id="1.10.8.1080:FF:000001">
    <property type="entry name" value="N-acetylmuramic acid 6-phosphate etherase"/>
    <property type="match status" value="1"/>
</dbReference>
<dbReference type="FunFam" id="3.40.50.10490:FF:000014">
    <property type="entry name" value="N-acetylmuramic acid 6-phosphate etherase"/>
    <property type="match status" value="1"/>
</dbReference>
<dbReference type="Gene3D" id="1.10.8.1080">
    <property type="match status" value="1"/>
</dbReference>
<dbReference type="Gene3D" id="3.40.50.10490">
    <property type="entry name" value="Glucose-6-phosphate isomerase like protein, domain 1"/>
    <property type="match status" value="1"/>
</dbReference>
<dbReference type="HAMAP" id="MF_00068">
    <property type="entry name" value="MurQ"/>
    <property type="match status" value="1"/>
</dbReference>
<dbReference type="InterPro" id="IPR005488">
    <property type="entry name" value="Etherase_MurQ"/>
</dbReference>
<dbReference type="InterPro" id="IPR005486">
    <property type="entry name" value="Glucokinase_regulatory_CS"/>
</dbReference>
<dbReference type="InterPro" id="IPR040190">
    <property type="entry name" value="MURQ/GCKR"/>
</dbReference>
<dbReference type="InterPro" id="IPR001347">
    <property type="entry name" value="SIS_dom"/>
</dbReference>
<dbReference type="InterPro" id="IPR046348">
    <property type="entry name" value="SIS_dom_sf"/>
</dbReference>
<dbReference type="NCBIfam" id="TIGR00274">
    <property type="entry name" value="N-acetylmuramic acid 6-phosphate etherase"/>
    <property type="match status" value="1"/>
</dbReference>
<dbReference type="NCBIfam" id="NF003915">
    <property type="entry name" value="PRK05441.1"/>
    <property type="match status" value="1"/>
</dbReference>
<dbReference type="NCBIfam" id="NF009222">
    <property type="entry name" value="PRK12570.1"/>
    <property type="match status" value="1"/>
</dbReference>
<dbReference type="PANTHER" id="PTHR10088">
    <property type="entry name" value="GLUCOKINASE REGULATORY PROTEIN"/>
    <property type="match status" value="1"/>
</dbReference>
<dbReference type="PANTHER" id="PTHR10088:SF4">
    <property type="entry name" value="GLUCOKINASE REGULATORY PROTEIN"/>
    <property type="match status" value="1"/>
</dbReference>
<dbReference type="Pfam" id="PF20741">
    <property type="entry name" value="GKRP-like_C"/>
    <property type="match status" value="1"/>
</dbReference>
<dbReference type="Pfam" id="PF22645">
    <property type="entry name" value="GKRP_SIS_N"/>
    <property type="match status" value="1"/>
</dbReference>
<dbReference type="SUPFAM" id="SSF53697">
    <property type="entry name" value="SIS domain"/>
    <property type="match status" value="1"/>
</dbReference>
<dbReference type="PROSITE" id="PS01272">
    <property type="entry name" value="GCKR"/>
    <property type="match status" value="1"/>
</dbReference>
<dbReference type="PROSITE" id="PS51464">
    <property type="entry name" value="SIS"/>
    <property type="match status" value="1"/>
</dbReference>
<organism>
    <name type="scientific">Escherichia coli O7:K1 (strain IAI39 / ExPEC)</name>
    <dbReference type="NCBI Taxonomy" id="585057"/>
    <lineage>
        <taxon>Bacteria</taxon>
        <taxon>Pseudomonadati</taxon>
        <taxon>Pseudomonadota</taxon>
        <taxon>Gammaproteobacteria</taxon>
        <taxon>Enterobacterales</taxon>
        <taxon>Enterobacteriaceae</taxon>
        <taxon>Escherichia</taxon>
    </lineage>
</organism>
<evidence type="ECO:0000255" key="1">
    <source>
        <dbReference type="HAMAP-Rule" id="MF_00068"/>
    </source>
</evidence>